<name>KAT3_MOUSE</name>
<accession>Q71RI9</accession>
<accession>Q8BJ84</accession>
<feature type="chain" id="PRO_0000287705" description="Kynurenine--oxoglutarate transaminase 3">
    <location>
        <begin position="1"/>
        <end position="455"/>
    </location>
</feature>
<feature type="binding site" evidence="1">
    <location>
        <position position="72"/>
    </location>
    <ligand>
        <name>substrate</name>
    </ligand>
</feature>
<feature type="binding site" evidence="1">
    <location>
        <position position="219"/>
    </location>
    <ligand>
        <name>substrate</name>
    </ligand>
</feature>
<feature type="binding site" evidence="1">
    <location>
        <position position="430"/>
    </location>
    <ligand>
        <name>substrate</name>
    </ligand>
</feature>
<feature type="modified residue" description="N6-acetyllysine; alternate" evidence="11">
    <location>
        <position position="117"/>
    </location>
</feature>
<feature type="modified residue" description="N6-succinyllysine; alternate" evidence="12">
    <location>
        <position position="117"/>
    </location>
</feature>
<feature type="modified residue" description="N6-(pyridoxal phosphate)lysine" evidence="1">
    <location>
        <position position="281"/>
    </location>
</feature>
<feature type="splice variant" id="VSP_025605" description="In isoform 2." evidence="4 5">
    <location>
        <begin position="1"/>
        <end position="35"/>
    </location>
</feature>
<feature type="helix" evidence="15">
    <location>
        <begin position="44"/>
        <end position="46"/>
    </location>
</feature>
<feature type="helix" evidence="15">
    <location>
        <begin position="53"/>
        <end position="56"/>
    </location>
</feature>
<feature type="helix" evidence="16">
    <location>
        <begin position="57"/>
        <end position="62"/>
    </location>
</feature>
<feature type="strand" evidence="15">
    <location>
        <begin position="66"/>
        <end position="68"/>
    </location>
</feature>
<feature type="strand" evidence="14">
    <location>
        <begin position="70"/>
        <end position="72"/>
    </location>
</feature>
<feature type="helix" evidence="15">
    <location>
        <begin position="80"/>
        <end position="90"/>
    </location>
</feature>
<feature type="helix" evidence="15">
    <location>
        <begin position="93"/>
        <end position="96"/>
    </location>
</feature>
<feature type="helix" evidence="15">
    <location>
        <begin position="105"/>
        <end position="119"/>
    </location>
</feature>
<feature type="turn" evidence="15">
    <location>
        <begin position="125"/>
        <end position="127"/>
    </location>
</feature>
<feature type="strand" evidence="15">
    <location>
        <begin position="128"/>
        <end position="133"/>
    </location>
</feature>
<feature type="helix" evidence="15">
    <location>
        <begin position="134"/>
        <end position="146"/>
    </location>
</feature>
<feature type="strand" evidence="15">
    <location>
        <begin position="152"/>
        <end position="158"/>
    </location>
</feature>
<feature type="helix" evidence="15">
    <location>
        <begin position="163"/>
        <end position="169"/>
    </location>
</feature>
<feature type="strand" evidence="15">
    <location>
        <begin position="173"/>
        <end position="178"/>
    </location>
</feature>
<feature type="helix" evidence="15">
    <location>
        <begin position="191"/>
        <end position="193"/>
    </location>
</feature>
<feature type="helix" evidence="15">
    <location>
        <begin position="198"/>
        <end position="202"/>
    </location>
</feature>
<feature type="strand" evidence="15">
    <location>
        <begin position="209"/>
        <end position="217"/>
    </location>
</feature>
<feature type="turn" evidence="15">
    <location>
        <begin position="219"/>
        <end position="221"/>
    </location>
</feature>
<feature type="helix" evidence="15">
    <location>
        <begin position="227"/>
        <end position="240"/>
    </location>
</feature>
<feature type="strand" evidence="15">
    <location>
        <begin position="243"/>
        <end position="247"/>
    </location>
</feature>
<feature type="turn" evidence="15">
    <location>
        <begin position="249"/>
        <end position="252"/>
    </location>
</feature>
<feature type="helix" evidence="15">
    <location>
        <begin position="263"/>
        <end position="265"/>
    </location>
</feature>
<feature type="turn" evidence="17">
    <location>
        <begin position="267"/>
        <end position="269"/>
    </location>
</feature>
<feature type="helix" evidence="15">
    <location>
        <begin position="270"/>
        <end position="272"/>
    </location>
</feature>
<feature type="strand" evidence="15">
    <location>
        <begin position="273"/>
        <end position="278"/>
    </location>
</feature>
<feature type="helix" evidence="15">
    <location>
        <begin position="279"/>
        <end position="282"/>
    </location>
</feature>
<feature type="helix" evidence="15">
    <location>
        <begin position="286"/>
        <end position="288"/>
    </location>
</feature>
<feature type="strand" evidence="15">
    <location>
        <begin position="291"/>
        <end position="294"/>
    </location>
</feature>
<feature type="helix" evidence="15">
    <location>
        <begin position="297"/>
        <end position="308"/>
    </location>
</feature>
<feature type="turn" evidence="15">
    <location>
        <begin position="309"/>
        <end position="311"/>
    </location>
</feature>
<feature type="helix" evidence="15">
    <location>
        <begin position="316"/>
        <end position="330"/>
    </location>
</feature>
<feature type="turn" evidence="15">
    <location>
        <begin position="331"/>
        <end position="334"/>
    </location>
</feature>
<feature type="strand" evidence="13">
    <location>
        <begin position="335"/>
        <end position="338"/>
    </location>
</feature>
<feature type="helix" evidence="15">
    <location>
        <begin position="339"/>
        <end position="359"/>
    </location>
</feature>
<feature type="turn" evidence="15">
    <location>
        <begin position="360"/>
        <end position="362"/>
    </location>
</feature>
<feature type="strand" evidence="15">
    <location>
        <begin position="364"/>
        <end position="367"/>
    </location>
</feature>
<feature type="strand" evidence="15">
    <location>
        <begin position="369"/>
        <end position="377"/>
    </location>
</feature>
<feature type="helix" evidence="15">
    <location>
        <begin position="379"/>
        <end position="381"/>
    </location>
</feature>
<feature type="strand" evidence="17">
    <location>
        <begin position="390"/>
        <end position="392"/>
    </location>
</feature>
<feature type="helix" evidence="15">
    <location>
        <begin position="394"/>
        <end position="406"/>
    </location>
</feature>
<feature type="strand" evidence="15">
    <location>
        <begin position="407"/>
        <end position="409"/>
    </location>
</feature>
<feature type="helix" evidence="15">
    <location>
        <begin position="413"/>
        <end position="416"/>
    </location>
</feature>
<feature type="turn" evidence="15">
    <location>
        <begin position="419"/>
        <end position="421"/>
    </location>
</feature>
<feature type="helix" evidence="15">
    <location>
        <begin position="422"/>
        <end position="425"/>
    </location>
</feature>
<feature type="strand" evidence="15">
    <location>
        <begin position="428"/>
        <end position="432"/>
    </location>
</feature>
<feature type="helix" evidence="15">
    <location>
        <begin position="437"/>
        <end position="448"/>
    </location>
</feature>
<comment type="function">
    <text evidence="3">Catalyzes the irreversible transamination of the L-tryptophan metabolite L-kynurenine to form kynurenic acid (KA), an intermediate in the tryptophan catabolic pathway which is also a broad spectrum antagonist of the three ionotropic excitatory amino acid receptors among others (PubMed:19029248). May catalyze the beta-elimination of S-conjugates and Se-conjugates of L-(seleno)cysteine, resulting in the cleavage of the C-S or C-Se bond (PubMed:19029248). Has transaminase activity towards L-kynurenine, tryptophan, phenylalanine, serine, cysteine, methionine, histidine, glutamine and asparagine with glyoxylate as an amino group acceptor (in vitro). Has lower activity with 2-oxoglutarate as amino group acceptor (in vitro) (PubMed:19029248).</text>
</comment>
<comment type="catalytic activity">
    <reaction evidence="3">
        <text>L-kynurenine + 2-oxoglutarate = kynurenate + L-glutamate + H2O</text>
        <dbReference type="Rhea" id="RHEA:65560"/>
        <dbReference type="ChEBI" id="CHEBI:15377"/>
        <dbReference type="ChEBI" id="CHEBI:16810"/>
        <dbReference type="ChEBI" id="CHEBI:29985"/>
        <dbReference type="ChEBI" id="CHEBI:57959"/>
        <dbReference type="ChEBI" id="CHEBI:58454"/>
        <dbReference type="EC" id="2.6.1.7"/>
    </reaction>
    <physiologicalReaction direction="left-to-right" evidence="7">
        <dbReference type="Rhea" id="RHEA:65561"/>
    </physiologicalReaction>
</comment>
<comment type="catalytic activity">
    <reaction evidence="3">
        <text>L-kynurenine + glyoxylate = kynurenate + glycine + H2O</text>
        <dbReference type="Rhea" id="RHEA:65896"/>
        <dbReference type="ChEBI" id="CHEBI:15377"/>
        <dbReference type="ChEBI" id="CHEBI:36655"/>
        <dbReference type="ChEBI" id="CHEBI:57305"/>
        <dbReference type="ChEBI" id="CHEBI:57959"/>
        <dbReference type="ChEBI" id="CHEBI:58454"/>
        <dbReference type="EC" id="2.6.1.63"/>
    </reaction>
    <physiologicalReaction direction="left-to-right" evidence="7">
        <dbReference type="Rhea" id="RHEA:65897"/>
    </physiologicalReaction>
</comment>
<comment type="catalytic activity">
    <reaction evidence="3">
        <text>3-hydroxy-L-kynurenine + glyoxylate = xanthurenate + glycine + H2O</text>
        <dbReference type="Rhea" id="RHEA:65900"/>
        <dbReference type="ChEBI" id="CHEBI:15377"/>
        <dbReference type="ChEBI" id="CHEBI:36655"/>
        <dbReference type="ChEBI" id="CHEBI:57305"/>
        <dbReference type="ChEBI" id="CHEBI:58125"/>
        <dbReference type="ChEBI" id="CHEBI:71201"/>
        <dbReference type="EC" id="2.6.1.63"/>
    </reaction>
    <physiologicalReaction direction="left-to-right" evidence="7">
        <dbReference type="Rhea" id="RHEA:65901"/>
    </physiologicalReaction>
</comment>
<comment type="catalytic activity">
    <reaction evidence="3">
        <text>an S-substituted L-cysteine + H2O = a thiol + pyruvate + NH4(+)</text>
        <dbReference type="Rhea" id="RHEA:18121"/>
        <dbReference type="ChEBI" id="CHEBI:15361"/>
        <dbReference type="ChEBI" id="CHEBI:15377"/>
        <dbReference type="ChEBI" id="CHEBI:28938"/>
        <dbReference type="ChEBI" id="CHEBI:29256"/>
        <dbReference type="ChEBI" id="CHEBI:58717"/>
        <dbReference type="EC" id="4.4.1.13"/>
    </reaction>
    <physiologicalReaction direction="left-to-right" evidence="7">
        <dbReference type="Rhea" id="RHEA:18122"/>
    </physiologicalReaction>
</comment>
<comment type="cofactor">
    <cofactor evidence="3">
        <name>pyridoxal 5'-phosphate</name>
        <dbReference type="ChEBI" id="CHEBI:597326"/>
    </cofactor>
</comment>
<comment type="activity regulation">
    <text evidence="3">Kynurenine transamination is competitively inhibited by cysteine, glutamine, histidine, methionine, leucine, or phenylalanine.</text>
</comment>
<comment type="biophysicochemical properties">
    <kinetics>
        <KM evidence="3">0.7 mM for glutamine</KM>
        <KM evidence="3">0.7 mM for histidine</KM>
        <KM evidence="3">0.7 mM for cysteine</KM>
        <KM evidence="3">0.9 mM for methionine</KM>
        <KM evidence="3">1.1 mM for phenylalanine</KM>
        <KM evidence="3">1.4 mM for asparagine</KM>
        <KM evidence="3">1.5 mM for kynurenine</KM>
        <KM evidence="3">7.1 mM for tryptophan</KM>
        <KM evidence="3">3 mM for serine</KM>
        <KM evidence="3">0.4 mM for glyoxylate</KM>
        <KM evidence="3">0.6 mM for phenylpyruvate</KM>
    </kinetics>
    <phDependence>
        <text evidence="3">Optimum pH is 9.</text>
    </phDependence>
    <temperatureDependence>
        <text evidence="3">Optimum temperature is 60 degrees Celsius.</text>
    </temperatureDependence>
</comment>
<comment type="pathway">
    <text evidence="3">Amino-acid degradation; L-kynurenine degradation; kynurenate from L-kynurenine: step 1/2.</text>
</comment>
<comment type="subunit">
    <text evidence="3">Homodimer.</text>
</comment>
<comment type="alternative products">
    <event type="alternative splicing"/>
    <isoform>
        <id>Q71RI9-1</id>
        <name>1</name>
        <sequence type="displayed"/>
    </isoform>
    <isoform>
        <id>Q71RI9-2</id>
        <name>2</name>
        <sequence type="described" ref="VSP_025605"/>
    </isoform>
</comment>
<comment type="tissue specificity">
    <text evidence="2">Widely expressed, with higher expression levels in liver, kidney, heart and neuroendocrine tissues.</text>
</comment>
<comment type="developmental stage">
    <text evidence="2">Expressed from postnatal day (PND) 7 and peaks in adult.</text>
</comment>
<comment type="similarity">
    <text evidence="6">Belongs to the class-I pyridoxal-phosphate-dependent aminotransferase family.</text>
</comment>
<reference key="1">
    <citation type="journal article" date="2006" name="Gene">
        <title>Characterization of kynurenine aminotransferase III, a novel member of a phylogenetically conserved KAT family.</title>
        <authorList>
            <person name="Yu P."/>
            <person name="Li Z."/>
            <person name="Zhang L."/>
            <person name="Tagle D.A."/>
            <person name="Cai T."/>
        </authorList>
    </citation>
    <scope>NUCLEOTIDE SEQUENCE [MRNA] (ISOFORM 1)</scope>
    <scope>TISSUE SPECIFICITY</scope>
    <scope>DEVELOPMENTAL STAGE</scope>
    <source>
        <strain>C57BL/6J</strain>
        <tissue>Brain</tissue>
    </source>
</reference>
<reference key="2">
    <citation type="journal article" date="2005" name="Science">
        <title>The transcriptional landscape of the mammalian genome.</title>
        <authorList>
            <person name="Carninci P."/>
            <person name="Kasukawa T."/>
            <person name="Katayama S."/>
            <person name="Gough J."/>
            <person name="Frith M.C."/>
            <person name="Maeda N."/>
            <person name="Oyama R."/>
            <person name="Ravasi T."/>
            <person name="Lenhard B."/>
            <person name="Wells C."/>
            <person name="Kodzius R."/>
            <person name="Shimokawa K."/>
            <person name="Bajic V.B."/>
            <person name="Brenner S.E."/>
            <person name="Batalov S."/>
            <person name="Forrest A.R."/>
            <person name="Zavolan M."/>
            <person name="Davis M.J."/>
            <person name="Wilming L.G."/>
            <person name="Aidinis V."/>
            <person name="Allen J.E."/>
            <person name="Ambesi-Impiombato A."/>
            <person name="Apweiler R."/>
            <person name="Aturaliya R.N."/>
            <person name="Bailey T.L."/>
            <person name="Bansal M."/>
            <person name="Baxter L."/>
            <person name="Beisel K.W."/>
            <person name="Bersano T."/>
            <person name="Bono H."/>
            <person name="Chalk A.M."/>
            <person name="Chiu K.P."/>
            <person name="Choudhary V."/>
            <person name="Christoffels A."/>
            <person name="Clutterbuck D.R."/>
            <person name="Crowe M.L."/>
            <person name="Dalla E."/>
            <person name="Dalrymple B.P."/>
            <person name="de Bono B."/>
            <person name="Della Gatta G."/>
            <person name="di Bernardo D."/>
            <person name="Down T."/>
            <person name="Engstrom P."/>
            <person name="Fagiolini M."/>
            <person name="Faulkner G."/>
            <person name="Fletcher C.F."/>
            <person name="Fukushima T."/>
            <person name="Furuno M."/>
            <person name="Futaki S."/>
            <person name="Gariboldi M."/>
            <person name="Georgii-Hemming P."/>
            <person name="Gingeras T.R."/>
            <person name="Gojobori T."/>
            <person name="Green R.E."/>
            <person name="Gustincich S."/>
            <person name="Harbers M."/>
            <person name="Hayashi Y."/>
            <person name="Hensch T.K."/>
            <person name="Hirokawa N."/>
            <person name="Hill D."/>
            <person name="Huminiecki L."/>
            <person name="Iacono M."/>
            <person name="Ikeo K."/>
            <person name="Iwama A."/>
            <person name="Ishikawa T."/>
            <person name="Jakt M."/>
            <person name="Kanapin A."/>
            <person name="Katoh M."/>
            <person name="Kawasawa Y."/>
            <person name="Kelso J."/>
            <person name="Kitamura H."/>
            <person name="Kitano H."/>
            <person name="Kollias G."/>
            <person name="Krishnan S.P."/>
            <person name="Kruger A."/>
            <person name="Kummerfeld S.K."/>
            <person name="Kurochkin I.V."/>
            <person name="Lareau L.F."/>
            <person name="Lazarevic D."/>
            <person name="Lipovich L."/>
            <person name="Liu J."/>
            <person name="Liuni S."/>
            <person name="McWilliam S."/>
            <person name="Madan Babu M."/>
            <person name="Madera M."/>
            <person name="Marchionni L."/>
            <person name="Matsuda H."/>
            <person name="Matsuzawa S."/>
            <person name="Miki H."/>
            <person name="Mignone F."/>
            <person name="Miyake S."/>
            <person name="Morris K."/>
            <person name="Mottagui-Tabar S."/>
            <person name="Mulder N."/>
            <person name="Nakano N."/>
            <person name="Nakauchi H."/>
            <person name="Ng P."/>
            <person name="Nilsson R."/>
            <person name="Nishiguchi S."/>
            <person name="Nishikawa S."/>
            <person name="Nori F."/>
            <person name="Ohara O."/>
            <person name="Okazaki Y."/>
            <person name="Orlando V."/>
            <person name="Pang K.C."/>
            <person name="Pavan W.J."/>
            <person name="Pavesi G."/>
            <person name="Pesole G."/>
            <person name="Petrovsky N."/>
            <person name="Piazza S."/>
            <person name="Reed J."/>
            <person name="Reid J.F."/>
            <person name="Ring B.Z."/>
            <person name="Ringwald M."/>
            <person name="Rost B."/>
            <person name="Ruan Y."/>
            <person name="Salzberg S.L."/>
            <person name="Sandelin A."/>
            <person name="Schneider C."/>
            <person name="Schoenbach C."/>
            <person name="Sekiguchi K."/>
            <person name="Semple C.A."/>
            <person name="Seno S."/>
            <person name="Sessa L."/>
            <person name="Sheng Y."/>
            <person name="Shibata Y."/>
            <person name="Shimada H."/>
            <person name="Shimada K."/>
            <person name="Silva D."/>
            <person name="Sinclair B."/>
            <person name="Sperling S."/>
            <person name="Stupka E."/>
            <person name="Sugiura K."/>
            <person name="Sultana R."/>
            <person name="Takenaka Y."/>
            <person name="Taki K."/>
            <person name="Tammoja K."/>
            <person name="Tan S.L."/>
            <person name="Tang S."/>
            <person name="Taylor M.S."/>
            <person name="Tegner J."/>
            <person name="Teichmann S.A."/>
            <person name="Ueda H.R."/>
            <person name="van Nimwegen E."/>
            <person name="Verardo R."/>
            <person name="Wei C.L."/>
            <person name="Yagi K."/>
            <person name="Yamanishi H."/>
            <person name="Zabarovsky E."/>
            <person name="Zhu S."/>
            <person name="Zimmer A."/>
            <person name="Hide W."/>
            <person name="Bult C."/>
            <person name="Grimmond S.M."/>
            <person name="Teasdale R.D."/>
            <person name="Liu E.T."/>
            <person name="Brusic V."/>
            <person name="Quackenbush J."/>
            <person name="Wahlestedt C."/>
            <person name="Mattick J.S."/>
            <person name="Hume D.A."/>
            <person name="Kai C."/>
            <person name="Sasaki D."/>
            <person name="Tomaru Y."/>
            <person name="Fukuda S."/>
            <person name="Kanamori-Katayama M."/>
            <person name="Suzuki M."/>
            <person name="Aoki J."/>
            <person name="Arakawa T."/>
            <person name="Iida J."/>
            <person name="Imamura K."/>
            <person name="Itoh M."/>
            <person name="Kato T."/>
            <person name="Kawaji H."/>
            <person name="Kawagashira N."/>
            <person name="Kawashima T."/>
            <person name="Kojima M."/>
            <person name="Kondo S."/>
            <person name="Konno H."/>
            <person name="Nakano K."/>
            <person name="Ninomiya N."/>
            <person name="Nishio T."/>
            <person name="Okada M."/>
            <person name="Plessy C."/>
            <person name="Shibata K."/>
            <person name="Shiraki T."/>
            <person name="Suzuki S."/>
            <person name="Tagami M."/>
            <person name="Waki K."/>
            <person name="Watahiki A."/>
            <person name="Okamura-Oho Y."/>
            <person name="Suzuki H."/>
            <person name="Kawai J."/>
            <person name="Hayashizaki Y."/>
        </authorList>
    </citation>
    <scope>NUCLEOTIDE SEQUENCE [LARGE SCALE MRNA] (ISOFORMS 1 AND 2)</scope>
    <source>
        <strain>C57BL/6J</strain>
    </source>
</reference>
<reference key="3">
    <citation type="journal article" date="2004" name="Genome Res.">
        <title>The status, quality, and expansion of the NIH full-length cDNA project: the Mammalian Gene Collection (MGC).</title>
        <authorList>
            <consortium name="The MGC Project Team"/>
        </authorList>
    </citation>
    <scope>NUCLEOTIDE SEQUENCE [LARGE SCALE MRNA] (ISOFORM 2)</scope>
    <source>
        <tissue>Brain</tissue>
    </source>
</reference>
<reference key="4">
    <citation type="journal article" date="2010" name="Cell">
        <title>A tissue-specific atlas of mouse protein phosphorylation and expression.</title>
        <authorList>
            <person name="Huttlin E.L."/>
            <person name="Jedrychowski M.P."/>
            <person name="Elias J.E."/>
            <person name="Goswami T."/>
            <person name="Rad R."/>
            <person name="Beausoleil S.A."/>
            <person name="Villen J."/>
            <person name="Haas W."/>
            <person name="Sowa M.E."/>
            <person name="Gygi S.P."/>
        </authorList>
    </citation>
    <scope>IDENTIFICATION BY MASS SPECTROMETRY [LARGE SCALE ANALYSIS]</scope>
    <source>
        <tissue>Brown adipose tissue</tissue>
        <tissue>Heart</tissue>
        <tissue>Kidney</tissue>
        <tissue>Liver</tissue>
        <tissue>Pancreas</tissue>
        <tissue>Spleen</tissue>
        <tissue>Testis</tissue>
    </source>
</reference>
<reference key="5">
    <citation type="journal article" date="2013" name="Mol. Cell">
        <title>SIRT5-mediated lysine desuccinylation impacts diverse metabolic pathways.</title>
        <authorList>
            <person name="Park J."/>
            <person name="Chen Y."/>
            <person name="Tishkoff D.X."/>
            <person name="Peng C."/>
            <person name="Tan M."/>
            <person name="Dai L."/>
            <person name="Xie Z."/>
            <person name="Zhang Y."/>
            <person name="Zwaans B.M."/>
            <person name="Skinner M.E."/>
            <person name="Lombard D.B."/>
            <person name="Zhao Y."/>
        </authorList>
    </citation>
    <scope>SUCCINYLATION [LARGE SCALE ANALYSIS] AT LYS-117</scope>
    <scope>IDENTIFICATION BY MASS SPECTROMETRY [LARGE SCALE ANALYSIS]</scope>
    <source>
        <tissue>Liver</tissue>
    </source>
</reference>
<reference key="6">
    <citation type="journal article" date="2013" name="Proc. Natl. Acad. Sci. U.S.A.">
        <title>Label-free quantitative proteomics of the lysine acetylome in mitochondria identifies substrates of SIRT3 in metabolic pathways.</title>
        <authorList>
            <person name="Rardin M.J."/>
            <person name="Newman J.C."/>
            <person name="Held J.M."/>
            <person name="Cusack M.P."/>
            <person name="Sorensen D.J."/>
            <person name="Li B."/>
            <person name="Schilling B."/>
            <person name="Mooney S.D."/>
            <person name="Kahn C.R."/>
            <person name="Verdin E."/>
            <person name="Gibson B.W."/>
        </authorList>
    </citation>
    <scope>ACETYLATION [LARGE SCALE ANALYSIS] AT LYS-117</scope>
    <scope>IDENTIFICATION BY MASS SPECTROMETRY [LARGE SCALE ANALYSIS]</scope>
    <source>
        <tissue>Liver</tissue>
    </source>
</reference>
<reference key="7">
    <citation type="journal article" date="2009" name="Mol. Cell. Biol.">
        <title>Biochemical and structural properties of mouse kynurenine aminotransferase III.</title>
        <authorList>
            <person name="Han Q."/>
            <person name="Robinson H."/>
            <person name="Cai T."/>
            <person name="Tagle D.A."/>
            <person name="Li J."/>
        </authorList>
    </citation>
    <scope>X-RAY CRYSTALLOGRAPHY (2.59 ANGSTROMS) OF 42-451</scope>
    <scope>FUNCTION</scope>
    <scope>CATALYTIC ACTIVITY</scope>
    <scope>BIOPHYSICOCHEMICAL PROPERTIES</scope>
    <scope>ACTIVITY REGULATION</scope>
    <scope>SUBUNIT</scope>
    <scope>COFACTOR</scope>
    <scope>PATHWAY</scope>
</reference>
<reference key="8">
    <citation type="journal article" date="2018" name="Mol. Cell. Biol.">
        <title>Correction for Han et al., 'Biochemical and structural properties of mouse kynurenine aminotransferase III'.</title>
        <authorList>
            <person name="Han Q."/>
            <person name="Robinson H."/>
            <person name="Cai T."/>
            <person name="Tagle D.A."/>
            <person name="Li J."/>
        </authorList>
    </citation>
    <scope>ERRATUM OF PUBMED:19029248</scope>
</reference>
<reference evidence="8 9 10" key="9">
    <citation type="journal article" date="2018" name="FEBS J.">
        <title>Detect, correct, retract: How to manage incorrect structural models.</title>
        <authorList>
            <person name="Wlodawer A."/>
            <person name="Dauter Z."/>
            <person name="Porebski P.J."/>
            <person name="Minor W."/>
            <person name="Stanfield R."/>
            <person name="Jaskolski M."/>
            <person name="Pozharski E."/>
            <person name="Weichenberger C.X."/>
            <person name="Rupp B."/>
        </authorList>
    </citation>
    <scope>X-RAY CRYSTALLOGRAPHY (2.26 ANGSTROMS) OF 42-451</scope>
</reference>
<keyword id="KW-0002">3D-structure</keyword>
<keyword id="KW-0007">Acetylation</keyword>
<keyword id="KW-0025">Alternative splicing</keyword>
<keyword id="KW-0032">Aminotransferase</keyword>
<keyword id="KW-0456">Lyase</keyword>
<keyword id="KW-0663">Pyridoxal phosphate</keyword>
<keyword id="KW-1185">Reference proteome</keyword>
<keyword id="KW-0808">Transferase</keyword>
<protein>
    <recommendedName>
        <fullName evidence="7">Kynurenine--oxoglutarate transaminase 3</fullName>
        <ecNumber evidence="3">2.6.1.7</ecNumber>
    </recommendedName>
    <alternativeName>
        <fullName evidence="7">Cysteine-S-conjugate beta-lyase 2</fullName>
        <ecNumber evidence="3">4.4.1.13</ecNumber>
    </alternativeName>
    <alternativeName>
        <fullName>Kynurenine aminotransferase 3</fullName>
    </alternativeName>
    <alternativeName>
        <fullName>Kynurenine aminotransferase III</fullName>
        <shortName>KATIII</shortName>
    </alternativeName>
    <alternativeName>
        <fullName evidence="7">Kynurenine--glyoxylate transaminase</fullName>
        <ecNumber evidence="3">2.6.1.63</ecNumber>
    </alternativeName>
    <alternativeName>
        <fullName>Kynurenine--oxoglutarate transaminase III</fullName>
    </alternativeName>
</protein>
<sequence>MLLAQRRLISLGCRSKPIKTIYSSSKVLGLCTSAKMALKFKNAKRIEGLDSNVWVEFTKLAADPSVVNLGQGFPDISPPSYVKEELSKAAFIDNMNQYTRGFGHPALVKALSCLYGKIYQRQIDPNEEILVAVGAYGSLFNSIQGLVDPGDEVIIMVPFYDCYEPMVRMAGAVPVFIPLRSKPTDGMKWTSSDWTFDPRELESKFSSKTKAIILNTPHNPLGKVYTRQELQVIADLCVKHDTLCISDEVYEWLVYTGHTHVKIATLPGMWERTITIGSAGKTFSVTGWKLGWSIGPAHLIKHLQTVQQNSFYTCATPLQAALAEAFWIDIKRMDDPECYFNSLPKELEVKRDRMVRLLNSVGLKPIVPDGGYFIIADVSSLGADLSDMNSDEPYDYKFVKWMTKHKKLTAIPVSAFCDSKSKPHFEKLVRFCFIKKDSTLDAAEEIFRAWNSQKS</sequence>
<evidence type="ECO:0000250" key="1">
    <source>
        <dbReference type="UniProtKB" id="Q16773"/>
    </source>
</evidence>
<evidence type="ECO:0000269" key="2">
    <source>
    </source>
</evidence>
<evidence type="ECO:0000269" key="3">
    <source>
    </source>
</evidence>
<evidence type="ECO:0000303" key="4">
    <source>
    </source>
</evidence>
<evidence type="ECO:0000303" key="5">
    <source>
    </source>
</evidence>
<evidence type="ECO:0000305" key="6"/>
<evidence type="ECO:0000305" key="7">
    <source>
    </source>
</evidence>
<evidence type="ECO:0007744" key="8">
    <source>
        <dbReference type="PDB" id="5VEP"/>
    </source>
</evidence>
<evidence type="ECO:0007744" key="9">
    <source>
        <dbReference type="PDB" id="5VEQ"/>
    </source>
</evidence>
<evidence type="ECO:0007744" key="10">
    <source>
        <dbReference type="PDB" id="5VER"/>
    </source>
</evidence>
<evidence type="ECO:0007744" key="11">
    <source>
    </source>
</evidence>
<evidence type="ECO:0007744" key="12">
    <source>
    </source>
</evidence>
<evidence type="ECO:0007829" key="13">
    <source>
        <dbReference type="PDB" id="2ZJG"/>
    </source>
</evidence>
<evidence type="ECO:0007829" key="14">
    <source>
        <dbReference type="PDB" id="3E2F"/>
    </source>
</evidence>
<evidence type="ECO:0007829" key="15">
    <source>
        <dbReference type="PDB" id="3E2Y"/>
    </source>
</evidence>
<evidence type="ECO:0007829" key="16">
    <source>
        <dbReference type="PDB" id="3E2Z"/>
    </source>
</evidence>
<evidence type="ECO:0007829" key="17">
    <source>
        <dbReference type="PDB" id="5VEP"/>
    </source>
</evidence>
<proteinExistence type="evidence at protein level"/>
<organism>
    <name type="scientific">Mus musculus</name>
    <name type="common">Mouse</name>
    <dbReference type="NCBI Taxonomy" id="10090"/>
    <lineage>
        <taxon>Eukaryota</taxon>
        <taxon>Metazoa</taxon>
        <taxon>Chordata</taxon>
        <taxon>Craniata</taxon>
        <taxon>Vertebrata</taxon>
        <taxon>Euteleostomi</taxon>
        <taxon>Mammalia</taxon>
        <taxon>Eutheria</taxon>
        <taxon>Euarchontoglires</taxon>
        <taxon>Glires</taxon>
        <taxon>Rodentia</taxon>
        <taxon>Myomorpha</taxon>
        <taxon>Muroidea</taxon>
        <taxon>Muridae</taxon>
        <taxon>Murinae</taxon>
        <taxon>Mus</taxon>
        <taxon>Mus</taxon>
    </lineage>
</organism>
<dbReference type="EC" id="2.6.1.7" evidence="3"/>
<dbReference type="EC" id="4.4.1.13" evidence="3"/>
<dbReference type="EC" id="2.6.1.63" evidence="3"/>
<dbReference type="EMBL" id="AF363737">
    <property type="protein sequence ID" value="AAQ15190.1"/>
    <property type="molecule type" value="mRNA"/>
</dbReference>
<dbReference type="EMBL" id="AK049569">
    <property type="protein sequence ID" value="BAC33817.1"/>
    <property type="molecule type" value="mRNA"/>
</dbReference>
<dbReference type="EMBL" id="AK145623">
    <property type="protein sequence ID" value="BAE26546.1"/>
    <property type="molecule type" value="mRNA"/>
</dbReference>
<dbReference type="EMBL" id="BC131942">
    <property type="protein sequence ID" value="AAI31943.1"/>
    <property type="molecule type" value="mRNA"/>
</dbReference>
<dbReference type="EMBL" id="BC132615">
    <property type="protein sequence ID" value="AAI32616.1"/>
    <property type="molecule type" value="mRNA"/>
</dbReference>
<dbReference type="CCDS" id="CCDS17881.1">
    <molecule id="Q71RI9-2"/>
</dbReference>
<dbReference type="CCDS" id="CCDS80040.1">
    <molecule id="Q71RI9-1"/>
</dbReference>
<dbReference type="RefSeq" id="NP_001280489.1">
    <molecule id="Q71RI9-1"/>
    <property type="nucleotide sequence ID" value="NM_001293560.1"/>
</dbReference>
<dbReference type="RefSeq" id="NP_776124.1">
    <molecule id="Q71RI9-2"/>
    <property type="nucleotide sequence ID" value="NM_173763.4"/>
</dbReference>
<dbReference type="RefSeq" id="XP_006501494.1">
    <molecule id="Q71RI9-2"/>
    <property type="nucleotide sequence ID" value="XM_006501431.3"/>
</dbReference>
<dbReference type="RefSeq" id="XP_011238416.1">
    <molecule id="Q71RI9-2"/>
    <property type="nucleotide sequence ID" value="XM_011240114.4"/>
</dbReference>
<dbReference type="PDB" id="2ZJG">
    <property type="method" value="X-ray"/>
    <property type="resolution" value="3.00 A"/>
    <property type="chains" value="A/B=42-451"/>
</dbReference>
<dbReference type="PDB" id="3E2F">
    <property type="method" value="X-ray"/>
    <property type="resolution" value="2.59 A"/>
    <property type="chains" value="A/B=42-451"/>
</dbReference>
<dbReference type="PDB" id="3E2Y">
    <property type="method" value="X-ray"/>
    <property type="resolution" value="2.26 A"/>
    <property type="chains" value="A/B=42-451"/>
</dbReference>
<dbReference type="PDB" id="3E2Z">
    <property type="method" value="X-ray"/>
    <property type="resolution" value="2.81 A"/>
    <property type="chains" value="A/B=42-451"/>
</dbReference>
<dbReference type="PDB" id="5VEP">
    <property type="method" value="X-ray"/>
    <property type="resolution" value="2.59 A"/>
    <property type="chains" value="A/B=42-451"/>
</dbReference>
<dbReference type="PDB" id="5VEQ">
    <property type="method" value="X-ray"/>
    <property type="resolution" value="2.26 A"/>
    <property type="chains" value="A/B=42-451"/>
</dbReference>
<dbReference type="PDB" id="5VER">
    <property type="method" value="X-ray"/>
    <property type="resolution" value="2.81 A"/>
    <property type="chains" value="A/B=42-451"/>
</dbReference>
<dbReference type="PDBsum" id="2ZJG"/>
<dbReference type="PDBsum" id="3E2F"/>
<dbReference type="PDBsum" id="3E2Y"/>
<dbReference type="PDBsum" id="3E2Z"/>
<dbReference type="PDBsum" id="5VEP"/>
<dbReference type="PDBsum" id="5VEQ"/>
<dbReference type="PDBsum" id="5VER"/>
<dbReference type="SMR" id="Q71RI9"/>
<dbReference type="BioGRID" id="230916">
    <property type="interactions" value="2"/>
</dbReference>
<dbReference type="FunCoup" id="Q71RI9">
    <property type="interactions" value="2354"/>
</dbReference>
<dbReference type="STRING" id="10090.ENSMUSP00000101825"/>
<dbReference type="GlyGen" id="Q71RI9">
    <property type="glycosylation" value="1 site, 1 O-linked glycan (1 site)"/>
</dbReference>
<dbReference type="iPTMnet" id="Q71RI9"/>
<dbReference type="PhosphoSitePlus" id="Q71RI9"/>
<dbReference type="SwissPalm" id="Q71RI9"/>
<dbReference type="jPOST" id="Q71RI9"/>
<dbReference type="PaxDb" id="10090-ENSMUSP00000041675"/>
<dbReference type="PeptideAtlas" id="Q71RI9"/>
<dbReference type="ProteomicsDB" id="268958">
    <molecule id="Q71RI9-1"/>
</dbReference>
<dbReference type="ProteomicsDB" id="268959">
    <molecule id="Q71RI9-2"/>
</dbReference>
<dbReference type="Pumba" id="Q71RI9"/>
<dbReference type="Antibodypedia" id="19822">
    <property type="antibodies" value="85 antibodies from 19 providers"/>
</dbReference>
<dbReference type="DNASU" id="229905"/>
<dbReference type="Ensembl" id="ENSMUST00000044392.11">
    <molecule id="Q71RI9-2"/>
    <property type="protein sequence ID" value="ENSMUSP00000041675.5"/>
    <property type="gene ID" value="ENSMUSG00000040213.14"/>
</dbReference>
<dbReference type="Ensembl" id="ENSMUST00000106218.8">
    <molecule id="Q71RI9-1"/>
    <property type="protein sequence ID" value="ENSMUSP00000101825.2"/>
    <property type="gene ID" value="ENSMUSG00000040213.14"/>
</dbReference>
<dbReference type="GeneID" id="229905"/>
<dbReference type="KEGG" id="mmu:229905"/>
<dbReference type="UCSC" id="uc008roz.2">
    <molecule id="Q71RI9-1"/>
    <property type="organism name" value="mouse"/>
</dbReference>
<dbReference type="AGR" id="MGI:2677849"/>
<dbReference type="CTD" id="56267"/>
<dbReference type="MGI" id="MGI:2677849">
    <property type="gene designation" value="Kyat3"/>
</dbReference>
<dbReference type="VEuPathDB" id="HostDB:ENSMUSG00000040213"/>
<dbReference type="eggNOG" id="KOG0257">
    <property type="taxonomic scope" value="Eukaryota"/>
</dbReference>
<dbReference type="GeneTree" id="ENSGT00940000155827"/>
<dbReference type="HOGENOM" id="CLU_017584_4_0_1"/>
<dbReference type="InParanoid" id="Q71RI9"/>
<dbReference type="OMA" id="PRDFKLC"/>
<dbReference type="OrthoDB" id="2414662at2759"/>
<dbReference type="PhylomeDB" id="Q71RI9"/>
<dbReference type="TreeFam" id="TF352342"/>
<dbReference type="BRENDA" id="2.6.1.15">
    <property type="organism ID" value="3474"/>
</dbReference>
<dbReference type="BRENDA" id="2.6.1.7">
    <property type="organism ID" value="3474"/>
</dbReference>
<dbReference type="BRENDA" id="4.4.1.13">
    <property type="organism ID" value="3474"/>
</dbReference>
<dbReference type="UniPathway" id="UPA00334">
    <property type="reaction ID" value="UER00726"/>
</dbReference>
<dbReference type="BioGRID-ORCS" id="229905">
    <property type="hits" value="2 hits in 77 CRISPR screens"/>
</dbReference>
<dbReference type="ChiTaRS" id="Kyat3">
    <property type="organism name" value="mouse"/>
</dbReference>
<dbReference type="EvolutionaryTrace" id="Q71RI9"/>
<dbReference type="PRO" id="PR:Q71RI9"/>
<dbReference type="Proteomes" id="UP000000589">
    <property type="component" value="Chromosome 3"/>
</dbReference>
<dbReference type="RNAct" id="Q71RI9">
    <property type="molecule type" value="protein"/>
</dbReference>
<dbReference type="Bgee" id="ENSMUSG00000040213">
    <property type="expression patterns" value="Expressed in left lobe of liver and 227 other cell types or tissues"/>
</dbReference>
<dbReference type="ExpressionAtlas" id="Q71RI9">
    <property type="expression patterns" value="baseline and differential"/>
</dbReference>
<dbReference type="GO" id="GO:0005739">
    <property type="term" value="C:mitochondrion"/>
    <property type="evidence" value="ECO:0007005"/>
    <property type="project" value="MGI"/>
</dbReference>
<dbReference type="GO" id="GO:0047804">
    <property type="term" value="F:cysteine-S-conjugate beta-lyase activity"/>
    <property type="evidence" value="ECO:0007669"/>
    <property type="project" value="UniProtKB-EC"/>
</dbReference>
<dbReference type="GO" id="GO:0047315">
    <property type="term" value="F:kynurenine-glyoxylate transaminase activity"/>
    <property type="evidence" value="ECO:0000314"/>
    <property type="project" value="UniProtKB"/>
</dbReference>
<dbReference type="GO" id="GO:0016212">
    <property type="term" value="F:kynurenine-oxoglutarate transaminase activity"/>
    <property type="evidence" value="ECO:0000314"/>
    <property type="project" value="UniProtKB"/>
</dbReference>
<dbReference type="GO" id="GO:0042803">
    <property type="term" value="F:protein homodimerization activity"/>
    <property type="evidence" value="ECO:0000353"/>
    <property type="project" value="UniProtKB"/>
</dbReference>
<dbReference type="GO" id="GO:0030170">
    <property type="term" value="F:pyridoxal phosphate binding"/>
    <property type="evidence" value="ECO:0007669"/>
    <property type="project" value="InterPro"/>
</dbReference>
<dbReference type="GO" id="GO:0006103">
    <property type="term" value="P:2-oxoglutarate metabolic process"/>
    <property type="evidence" value="ECO:0000314"/>
    <property type="project" value="UniProtKB"/>
</dbReference>
<dbReference type="GO" id="GO:0006520">
    <property type="term" value="P:amino acid metabolic process"/>
    <property type="evidence" value="ECO:0000314"/>
    <property type="project" value="UniProtKB"/>
</dbReference>
<dbReference type="GO" id="GO:0009058">
    <property type="term" value="P:biosynthetic process"/>
    <property type="evidence" value="ECO:0007669"/>
    <property type="project" value="InterPro"/>
</dbReference>
<dbReference type="GO" id="GO:0070189">
    <property type="term" value="P:kynurenine metabolic process"/>
    <property type="evidence" value="ECO:0000314"/>
    <property type="project" value="UniProtKB"/>
</dbReference>
<dbReference type="GO" id="GO:0097053">
    <property type="term" value="P:L-kynurenine catabolic process"/>
    <property type="evidence" value="ECO:0007669"/>
    <property type="project" value="UniProtKB-UniPathway"/>
</dbReference>
<dbReference type="CDD" id="cd00609">
    <property type="entry name" value="AAT_like"/>
    <property type="match status" value="1"/>
</dbReference>
<dbReference type="FunFam" id="3.90.1150.10:FF:000275">
    <property type="entry name" value="kynurenine--oxoglutarate transaminase 1"/>
    <property type="match status" value="1"/>
</dbReference>
<dbReference type="FunFam" id="3.40.640.10:FF:000024">
    <property type="entry name" value="Kynurenine--oxoglutarate transaminase 3"/>
    <property type="match status" value="1"/>
</dbReference>
<dbReference type="FunFam" id="3.90.1150.10:FF:000021">
    <property type="entry name" value="Kynurenine--oxoglutarate transaminase 3"/>
    <property type="match status" value="1"/>
</dbReference>
<dbReference type="Gene3D" id="3.90.1150.10">
    <property type="entry name" value="Aspartate Aminotransferase, domain 1"/>
    <property type="match status" value="1"/>
</dbReference>
<dbReference type="Gene3D" id="3.40.640.10">
    <property type="entry name" value="Type I PLP-dependent aspartate aminotransferase-like (Major domain)"/>
    <property type="match status" value="1"/>
</dbReference>
<dbReference type="InterPro" id="IPR004839">
    <property type="entry name" value="Aminotransferase_I/II_large"/>
</dbReference>
<dbReference type="InterPro" id="IPR051326">
    <property type="entry name" value="Kynurenine-oxoglutarate_AT"/>
</dbReference>
<dbReference type="InterPro" id="IPR015424">
    <property type="entry name" value="PyrdxlP-dep_Trfase"/>
</dbReference>
<dbReference type="InterPro" id="IPR015421">
    <property type="entry name" value="PyrdxlP-dep_Trfase_major"/>
</dbReference>
<dbReference type="InterPro" id="IPR015422">
    <property type="entry name" value="PyrdxlP-dep_Trfase_small"/>
</dbReference>
<dbReference type="PANTHER" id="PTHR43807">
    <property type="entry name" value="FI04487P"/>
    <property type="match status" value="1"/>
</dbReference>
<dbReference type="PANTHER" id="PTHR43807:SF6">
    <property type="entry name" value="KYNURENINE--OXOGLUTARATE TRANSAMINASE 3"/>
    <property type="match status" value="1"/>
</dbReference>
<dbReference type="Pfam" id="PF00155">
    <property type="entry name" value="Aminotran_1_2"/>
    <property type="match status" value="1"/>
</dbReference>
<dbReference type="SUPFAM" id="SSF53383">
    <property type="entry name" value="PLP-dependent transferases"/>
    <property type="match status" value="1"/>
</dbReference>
<gene>
    <name type="primary">Kyat3</name>
    <name type="synonym">Ccbl2</name>
    <name type="synonym">Kat3</name>
</gene>